<reference key="1">
    <citation type="journal article" date="1990" name="J. Biol. Chem.">
        <title>The sequence of the cyo operon indicates substantial structural similarities between the cytochrome o ubiquinol oxidase of Escherichia coli and the aa3-type family of cytochrome c oxidases.</title>
        <authorList>
            <person name="Chepuri V."/>
            <person name="Lemieux L."/>
            <person name="Au D.C.T."/>
            <person name="Gennis R.B."/>
        </authorList>
    </citation>
    <scope>NUCLEOTIDE SEQUENCE [GENOMIC DNA]</scope>
</reference>
<reference key="2">
    <citation type="submission" date="1997-01" db="EMBL/GenBank/DDBJ databases">
        <title>Sequence of minutes 4-25 of Escherichia coli.</title>
        <authorList>
            <person name="Chung E."/>
            <person name="Allen E."/>
            <person name="Araujo R."/>
            <person name="Aparicio A.M."/>
            <person name="Davis K."/>
            <person name="Duncan M."/>
            <person name="Federspiel N."/>
            <person name="Hyman R."/>
            <person name="Kalman S."/>
            <person name="Komp C."/>
            <person name="Kurdi O."/>
            <person name="Lew H."/>
            <person name="Lin D."/>
            <person name="Namath A."/>
            <person name="Oefner P."/>
            <person name="Roberts D."/>
            <person name="Schramm S."/>
            <person name="Davis R.W."/>
        </authorList>
    </citation>
    <scope>NUCLEOTIDE SEQUENCE [LARGE SCALE GENOMIC DNA]</scope>
    <source>
        <strain>K12 / MG1655 / ATCC 47076</strain>
    </source>
</reference>
<reference key="3">
    <citation type="journal article" date="1997" name="Science">
        <title>The complete genome sequence of Escherichia coli K-12.</title>
        <authorList>
            <person name="Blattner F.R."/>
            <person name="Plunkett G. III"/>
            <person name="Bloch C.A."/>
            <person name="Perna N.T."/>
            <person name="Burland V."/>
            <person name="Riley M."/>
            <person name="Collado-Vides J."/>
            <person name="Glasner J.D."/>
            <person name="Rode C.K."/>
            <person name="Mayhew G.F."/>
            <person name="Gregor J."/>
            <person name="Davis N.W."/>
            <person name="Kirkpatrick H.A."/>
            <person name="Goeden M.A."/>
            <person name="Rose D.J."/>
            <person name="Mau B."/>
            <person name="Shao Y."/>
        </authorList>
    </citation>
    <scope>NUCLEOTIDE SEQUENCE [LARGE SCALE GENOMIC DNA]</scope>
    <source>
        <strain>K12 / MG1655 / ATCC 47076</strain>
    </source>
</reference>
<reference key="4">
    <citation type="journal article" date="2006" name="Mol. Syst. Biol.">
        <title>Highly accurate genome sequences of Escherichia coli K-12 strains MG1655 and W3110.</title>
        <authorList>
            <person name="Hayashi K."/>
            <person name="Morooka N."/>
            <person name="Yamamoto Y."/>
            <person name="Fujita K."/>
            <person name="Isono K."/>
            <person name="Choi S."/>
            <person name="Ohtsubo E."/>
            <person name="Baba T."/>
            <person name="Wanner B.L."/>
            <person name="Mori H."/>
            <person name="Horiuchi T."/>
        </authorList>
    </citation>
    <scope>NUCLEOTIDE SEQUENCE [LARGE SCALE GENOMIC DNA]</scope>
    <source>
        <strain>K12 / W3110 / ATCC 27325 / DSM 5911</strain>
    </source>
</reference>
<reference key="5">
    <citation type="journal article" date="1983" name="Proc. Natl. Acad. Sci. U.S.A.">
        <title>Reconstitution of active transport in proteoliposomes containing cytochrome o oxidase and lac carrier protein purified from Escherichia coli.</title>
        <authorList>
            <person name="Matsushita K."/>
            <person name="Patel L."/>
            <person name="Gennis R.B."/>
            <person name="Kaback H.R."/>
        </authorList>
    </citation>
    <scope>FUNCTION IN UBIQUINOL OXIDATION</scope>
    <scope>FUNCTION IN PROTON ELECTROCHEMICAL GRADIENT GENERATION</scope>
    <scope>SUBUNIT</scope>
</reference>
<reference key="6">
    <citation type="journal article" date="1990" name="J. Biol. Chem.">
        <title>The use of gene fusions to determine the topology of all of the subunits of the cytochrome o terminal oxidase complex of Escherichia coli.</title>
        <authorList>
            <person name="Chepuri V."/>
            <person name="Gennis R.B."/>
        </authorList>
    </citation>
    <scope>TOPOLOGY</scope>
</reference>
<reference key="7">
    <citation type="journal article" date="1990" name="Biochim. Biophys. Acta">
        <title>Recent studies of the cytochrome o terminal oxidase complex of Escherichia coli.</title>
        <authorList>
            <person name="Chepuri V."/>
            <person name="Lemieux L."/>
            <person name="Hill J."/>
            <person name="Alben J.O."/>
            <person name="Gennis R.B."/>
        </authorList>
    </citation>
    <scope>TOPOLOGY</scope>
</reference>
<reference key="8">
    <citation type="journal article" date="2005" name="Science">
        <title>Global topology analysis of the Escherichia coli inner membrane proteome.</title>
        <authorList>
            <person name="Daley D.O."/>
            <person name="Rapp M."/>
            <person name="Granseth E."/>
            <person name="Melen K."/>
            <person name="Drew D."/>
            <person name="von Heijne G."/>
        </authorList>
    </citation>
    <scope>TOPOLOGY [LARGE SCALE ANALYSIS]</scope>
    <source>
        <strain>K12 / MG1655 / ATCC 47076</strain>
    </source>
</reference>
<reference key="9">
    <citation type="journal article" date="2009" name="J. Bacteriol.">
        <title>Respiration of Escherichia coli can be fully uncoupled via the nonelectrogenic terminal cytochrome bd-II oxidase.</title>
        <authorList>
            <person name="Bekker M."/>
            <person name="de Vries S."/>
            <person name="Ter Beek A."/>
            <person name="Hellingwerf K.J."/>
            <person name="de Mattos M.J."/>
        </authorList>
    </citation>
    <scope>FUNCTION AS AN OXIDASE</scope>
    <scope>FUNCTION AS A PROTON PUMP</scope>
    <scope>DISRUPTION PHENOTYPE</scope>
    <source>
        <strain>K12</strain>
    </source>
</reference>
<reference key="10">
    <citation type="journal article" date="2012" name="Appl. Environ. Microbiol.">
        <title>Uncoupling of substrate-level phosphorylation in Escherichia coli during glucose-limited growth.</title>
        <authorList>
            <person name="Sharma P."/>
            <person name="Hellingwerf K.J."/>
            <person name="de Mattos M.J."/>
            <person name="Bekker M."/>
        </authorList>
    </citation>
    <scope>FUNCTION AS AN OXIDASE</scope>
    <scope>FUNCTION IN PROTON TRANSLOCATION</scope>
    <scope>DISRUPTION PHENOTYPE</scope>
    <source>
        <strain>K12</strain>
    </source>
</reference>
<reference key="11">
    <citation type="journal article" date="2000" name="Nat. Struct. Biol.">
        <title>The structure of the ubiquinol oxidase from Escherichia coli and its ubiquinone binding site.</title>
        <authorList>
            <person name="Abramson J."/>
            <person name="Riistama S."/>
            <person name="Larsson G."/>
            <person name="Jasaitis A."/>
            <person name="Svensson-Ek M."/>
            <person name="Puustinen A."/>
            <person name="Iwata S."/>
            <person name="Wikstrom M."/>
        </authorList>
    </citation>
    <scope>X-RAY CRYSTALLOGRAPHY (3.5 ANGSTROMS)</scope>
    <scope>SUBUNIT</scope>
</reference>
<gene>
    <name type="primary">cyoC</name>
    <name type="ordered locus">b0430</name>
    <name type="ordered locus">JW0420</name>
</gene>
<dbReference type="EMBL" id="J05492">
    <property type="protein sequence ID" value="AAA23633.1"/>
    <property type="molecule type" value="Genomic_DNA"/>
</dbReference>
<dbReference type="EMBL" id="U82664">
    <property type="protein sequence ID" value="AAB40186.1"/>
    <property type="molecule type" value="Genomic_DNA"/>
</dbReference>
<dbReference type="EMBL" id="U00096">
    <property type="protein sequence ID" value="AAC73533.1"/>
    <property type="molecule type" value="Genomic_DNA"/>
</dbReference>
<dbReference type="EMBL" id="AP009048">
    <property type="protein sequence ID" value="BAE76210.1"/>
    <property type="molecule type" value="Genomic_DNA"/>
</dbReference>
<dbReference type="PIR" id="C42226">
    <property type="entry name" value="C42226"/>
</dbReference>
<dbReference type="RefSeq" id="NP_414964.1">
    <property type="nucleotide sequence ID" value="NC_000913.3"/>
</dbReference>
<dbReference type="RefSeq" id="WP_000179819.1">
    <property type="nucleotide sequence ID" value="NZ_STEB01000007.1"/>
</dbReference>
<dbReference type="PDB" id="1FFT">
    <property type="method" value="X-ray"/>
    <property type="resolution" value="3.50 A"/>
    <property type="chains" value="C/H=25-204"/>
</dbReference>
<dbReference type="PDB" id="6WTI">
    <property type="method" value="EM"/>
    <property type="resolution" value="2.38 A"/>
    <property type="chains" value="C=1-204"/>
</dbReference>
<dbReference type="PDB" id="7CUB">
    <property type="method" value="EM"/>
    <property type="resolution" value="2.55 A"/>
    <property type="chains" value="C=1-204"/>
</dbReference>
<dbReference type="PDB" id="7CUQ">
    <property type="method" value="EM"/>
    <property type="resolution" value="2.64 A"/>
    <property type="chains" value="C=1-204"/>
</dbReference>
<dbReference type="PDB" id="7CUW">
    <property type="method" value="EM"/>
    <property type="resolution" value="2.63 A"/>
    <property type="chains" value="C=1-204"/>
</dbReference>
<dbReference type="PDB" id="7N9Z">
    <property type="method" value="EM"/>
    <property type="resolution" value="2.19 A"/>
    <property type="chains" value="H=1-204"/>
</dbReference>
<dbReference type="PDB" id="7XMC">
    <property type="method" value="EM"/>
    <property type="resolution" value="3.09 A"/>
    <property type="chains" value="C=1-204"/>
</dbReference>
<dbReference type="PDB" id="7XMD">
    <property type="method" value="EM"/>
    <property type="resolution" value="2.99 A"/>
    <property type="chains" value="C=1-204"/>
</dbReference>
<dbReference type="PDB" id="8F68">
    <property type="method" value="EM"/>
    <property type="resolution" value="3.15 A"/>
    <property type="chains" value="C=21-204"/>
</dbReference>
<dbReference type="PDB" id="8F6C">
    <property type="method" value="EM"/>
    <property type="resolution" value="3.46 A"/>
    <property type="chains" value="C/G=21-204"/>
</dbReference>
<dbReference type="PDB" id="8GO3">
    <property type="method" value="EM"/>
    <property type="resolution" value="3.09 A"/>
    <property type="chains" value="C=1-204"/>
</dbReference>
<dbReference type="PDB" id="8QQK">
    <property type="method" value="EM"/>
    <property type="resolution" value="2.80 A"/>
    <property type="chains" value="C=1-204"/>
</dbReference>
<dbReference type="PDBsum" id="1FFT"/>
<dbReference type="PDBsum" id="6WTI"/>
<dbReference type="PDBsum" id="7CUB"/>
<dbReference type="PDBsum" id="7CUQ"/>
<dbReference type="PDBsum" id="7CUW"/>
<dbReference type="PDBsum" id="7N9Z"/>
<dbReference type="PDBsum" id="7XMC"/>
<dbReference type="PDBsum" id="7XMD"/>
<dbReference type="PDBsum" id="8F68"/>
<dbReference type="PDBsum" id="8F6C"/>
<dbReference type="PDBsum" id="8GO3"/>
<dbReference type="PDBsum" id="8QQK"/>
<dbReference type="EMDB" id="EMD-18594"/>
<dbReference type="EMDB" id="EMD-28877"/>
<dbReference type="EMDB" id="EMD-28879"/>
<dbReference type="EMDB" id="EMD-30471"/>
<dbReference type="EMDB" id="EMD-30474"/>
<dbReference type="EMDB" id="EMD-30475"/>
<dbReference type="EMDB" id="EMD-33293"/>
<dbReference type="EMDB" id="EMD-33294"/>
<dbReference type="SMR" id="P0ABJ3"/>
<dbReference type="BioGRID" id="4261578">
    <property type="interactions" value="211"/>
</dbReference>
<dbReference type="ComplexPortal" id="CPX-2102">
    <property type="entry name" value="Cytochrome bo3 ubiquinol oxidase complex"/>
</dbReference>
<dbReference type="DIP" id="DIP-47944N"/>
<dbReference type="FunCoup" id="P0ABJ3">
    <property type="interactions" value="355"/>
</dbReference>
<dbReference type="IntAct" id="P0ABJ3">
    <property type="interactions" value="1"/>
</dbReference>
<dbReference type="STRING" id="511145.b0430"/>
<dbReference type="TCDB" id="3.D.4.5.1">
    <property type="family name" value="the proton-translocating cytochrome oxidase (cox) superfamily"/>
</dbReference>
<dbReference type="PaxDb" id="511145-b0430"/>
<dbReference type="EnsemblBacteria" id="AAC73533">
    <property type="protein sequence ID" value="AAC73533"/>
    <property type="gene ID" value="b0430"/>
</dbReference>
<dbReference type="GeneID" id="946897"/>
<dbReference type="KEGG" id="ecj:JW0420"/>
<dbReference type="KEGG" id="eco:b0430"/>
<dbReference type="KEGG" id="ecoc:C3026_02100"/>
<dbReference type="PATRIC" id="fig|1411691.4.peg.1847"/>
<dbReference type="EchoBASE" id="EB0177"/>
<dbReference type="eggNOG" id="COG1845">
    <property type="taxonomic scope" value="Bacteria"/>
</dbReference>
<dbReference type="HOGENOM" id="CLU_044071_3_0_6"/>
<dbReference type="InParanoid" id="P0ABJ3"/>
<dbReference type="OMA" id="TFKAVNP"/>
<dbReference type="OrthoDB" id="9810850at2"/>
<dbReference type="PhylomeDB" id="P0ABJ3"/>
<dbReference type="BioCyc" id="EcoCyc:CYOC-MONOMER"/>
<dbReference type="BioCyc" id="MetaCyc:CYOC-MONOMER"/>
<dbReference type="BRENDA" id="7.1.1.3">
    <property type="organism ID" value="2026"/>
</dbReference>
<dbReference type="EvolutionaryTrace" id="P0ABJ3"/>
<dbReference type="PRO" id="PR:P0ABJ3"/>
<dbReference type="Proteomes" id="UP000000625">
    <property type="component" value="Chromosome"/>
</dbReference>
<dbReference type="GO" id="GO:0009319">
    <property type="term" value="C:cytochrome o ubiquinol oxidase complex"/>
    <property type="evidence" value="ECO:0000314"/>
    <property type="project" value="EcoCyc"/>
</dbReference>
<dbReference type="GO" id="GO:0005886">
    <property type="term" value="C:plasma membrane"/>
    <property type="evidence" value="ECO:0000314"/>
    <property type="project" value="ComplexPortal"/>
</dbReference>
<dbReference type="GO" id="GO:0009486">
    <property type="term" value="F:cytochrome bo3 ubiquinol oxidase activity"/>
    <property type="evidence" value="ECO:0000314"/>
    <property type="project" value="EcoCyc"/>
</dbReference>
<dbReference type="GO" id="GO:0004129">
    <property type="term" value="F:cytochrome-c oxidase activity"/>
    <property type="evidence" value="ECO:0007669"/>
    <property type="project" value="InterPro"/>
</dbReference>
<dbReference type="GO" id="GO:0009055">
    <property type="term" value="F:electron transfer activity"/>
    <property type="evidence" value="ECO:0000314"/>
    <property type="project" value="EcoCyc"/>
</dbReference>
<dbReference type="GO" id="GO:0015453">
    <property type="term" value="F:oxidoreduction-driven active transmembrane transporter activity"/>
    <property type="evidence" value="ECO:0000314"/>
    <property type="project" value="EcoCyc"/>
</dbReference>
<dbReference type="GO" id="GO:0015078">
    <property type="term" value="F:proton transmembrane transporter activity"/>
    <property type="evidence" value="ECO:0000314"/>
    <property type="project" value="EcoCyc"/>
</dbReference>
<dbReference type="GO" id="GO:0019646">
    <property type="term" value="P:aerobic electron transport chain"/>
    <property type="evidence" value="ECO:0000314"/>
    <property type="project" value="ComplexPortal"/>
</dbReference>
<dbReference type="GO" id="GO:0009060">
    <property type="term" value="P:aerobic respiration"/>
    <property type="evidence" value="ECO:0000315"/>
    <property type="project" value="EcoCyc"/>
</dbReference>
<dbReference type="GO" id="GO:0015990">
    <property type="term" value="P:electron transport coupled proton transport"/>
    <property type="evidence" value="ECO:0000314"/>
    <property type="project" value="ComplexPortal"/>
</dbReference>
<dbReference type="CDD" id="cd02863">
    <property type="entry name" value="Ubiquinol_oxidase_III"/>
    <property type="match status" value="1"/>
</dbReference>
<dbReference type="FunFam" id="1.20.120.80:FF:000001">
    <property type="entry name" value="Cytochrome (Ubi)quinol oxidase subunit III"/>
    <property type="match status" value="1"/>
</dbReference>
<dbReference type="Gene3D" id="1.20.120.80">
    <property type="entry name" value="Cytochrome c oxidase, subunit III, four-helix bundle"/>
    <property type="match status" value="1"/>
</dbReference>
<dbReference type="InterPro" id="IPR024791">
    <property type="entry name" value="Cyt_c/ubiquinol_Oxase_su3"/>
</dbReference>
<dbReference type="InterPro" id="IPR000298">
    <property type="entry name" value="Cyt_c_oxidase-like_su3"/>
</dbReference>
<dbReference type="InterPro" id="IPR035973">
    <property type="entry name" value="Cyt_c_oxidase_su3-like_sf"/>
</dbReference>
<dbReference type="InterPro" id="IPR013833">
    <property type="entry name" value="Cyt_c_oxidase_su3_a-hlx"/>
</dbReference>
<dbReference type="InterPro" id="IPR014206">
    <property type="entry name" value="Cyt_c_ubiqinol_oxidase_su3"/>
</dbReference>
<dbReference type="InterPro" id="IPR033946">
    <property type="entry name" value="Ubiquinol_oxase_su3_dom"/>
</dbReference>
<dbReference type="NCBIfam" id="TIGR02842">
    <property type="entry name" value="CyoC"/>
    <property type="match status" value="1"/>
</dbReference>
<dbReference type="NCBIfam" id="NF007944">
    <property type="entry name" value="PRK10663.1"/>
    <property type="match status" value="1"/>
</dbReference>
<dbReference type="PANTHER" id="PTHR11403:SF2">
    <property type="entry name" value="CYTOCHROME BO(3) UBIQUINOL OXIDASE SUBUNIT 3"/>
    <property type="match status" value="1"/>
</dbReference>
<dbReference type="PANTHER" id="PTHR11403">
    <property type="entry name" value="CYTOCHROME C OXIDASE SUBUNIT III"/>
    <property type="match status" value="1"/>
</dbReference>
<dbReference type="Pfam" id="PF00510">
    <property type="entry name" value="COX3"/>
    <property type="match status" value="1"/>
</dbReference>
<dbReference type="SUPFAM" id="SSF81452">
    <property type="entry name" value="Cytochrome c oxidase subunit III-like"/>
    <property type="match status" value="1"/>
</dbReference>
<dbReference type="PROSITE" id="PS50253">
    <property type="entry name" value="COX3"/>
    <property type="match status" value="1"/>
</dbReference>
<sequence>MATDTLTHATAHAHEHGHHDAGGTKIFGFWIYLMSDCILFSILFATYAVLVNGTAGGPTGKDIFELPFVLVETFLLLFSSITYGMAAIAMYKNNKSQVISWLALTWLFGAGFIGMEIYEFHHLIVNGMGPDRSGFLSAFFALVGTHGLHVTSGLIWMAVLMVQIARRGLTSTNRTRIMCLSLFWHFLDVVWICVFTVVYLMGAM</sequence>
<organism>
    <name type="scientific">Escherichia coli (strain K12)</name>
    <dbReference type="NCBI Taxonomy" id="83333"/>
    <lineage>
        <taxon>Bacteria</taxon>
        <taxon>Pseudomonadati</taxon>
        <taxon>Pseudomonadota</taxon>
        <taxon>Gammaproteobacteria</taxon>
        <taxon>Enterobacterales</taxon>
        <taxon>Enterobacteriaceae</taxon>
        <taxon>Escherichia</taxon>
    </lineage>
</organism>
<keyword id="KW-0002">3D-structure</keyword>
<keyword id="KW-0997">Cell inner membrane</keyword>
<keyword id="KW-1003">Cell membrane</keyword>
<keyword id="KW-0249">Electron transport</keyword>
<keyword id="KW-0472">Membrane</keyword>
<keyword id="KW-0560">Oxidoreductase</keyword>
<keyword id="KW-1185">Reference proteome</keyword>
<keyword id="KW-0812">Transmembrane</keyword>
<keyword id="KW-1133">Transmembrane helix</keyword>
<keyword id="KW-0813">Transport</keyword>
<name>CYOC_ECOLI</name>
<accession>P0ABJ3</accession>
<accession>P18402</accession>
<accession>Q2MBZ6</accession>
<comment type="function">
    <text evidence="2 3 4">Cytochrome bo(3) ubiquinol terminal oxidase is the component of the aerobic respiratory chain of E.coli that predominates when cells are grown at high aeration. Has proton pump activity across the membrane in addition to electron transfer, pumping 2 protons/electron.</text>
</comment>
<comment type="subunit">
    <text evidence="1 4">Heterooctamer of two A chains, two B chains, two C chains and two D chains.</text>
</comment>
<comment type="subcellular location">
    <subcellularLocation>
        <location>Cell inner membrane</location>
        <topology>Multi-pass membrane protein</topology>
    </subcellularLocation>
</comment>
<comment type="disruption phenotype">
    <text evidence="2 3">Increased reduction of the ubiquinone pool (in aerobically grown minimal medium with glucose).</text>
</comment>
<comment type="similarity">
    <text evidence="5">Belongs to the cytochrome c oxidase subunit 3 family.</text>
</comment>
<feature type="chain" id="PRO_0000183893" description="Cytochrome bo(3) ubiquinol oxidase subunit 3">
    <location>
        <begin position="1"/>
        <end position="204"/>
    </location>
</feature>
<feature type="topological domain" description="Cytoplasmic" evidence="5">
    <location>
        <begin position="1"/>
        <end position="31"/>
    </location>
</feature>
<feature type="transmembrane region" description="Helical" evidence="5">
    <location>
        <begin position="32"/>
        <end position="50"/>
    </location>
</feature>
<feature type="topological domain" description="Periplasmic" evidence="5">
    <location>
        <begin position="51"/>
        <end position="66"/>
    </location>
</feature>
<feature type="transmembrane region" description="Helical" evidence="5">
    <location>
        <begin position="67"/>
        <end position="85"/>
    </location>
</feature>
<feature type="topological domain" description="Cytoplasmic" evidence="5">
    <location>
        <begin position="86"/>
        <end position="101"/>
    </location>
</feature>
<feature type="transmembrane region" description="Helical" evidence="5">
    <location>
        <begin position="102"/>
        <end position="120"/>
    </location>
</feature>
<feature type="topological domain" description="Periplasmic" evidence="5">
    <location>
        <begin position="121"/>
        <end position="142"/>
    </location>
</feature>
<feature type="transmembrane region" description="Helical" evidence="5">
    <location>
        <begin position="143"/>
        <end position="161"/>
    </location>
</feature>
<feature type="topological domain" description="Cytoplasmic" evidence="5">
    <location>
        <begin position="162"/>
        <end position="184"/>
    </location>
</feature>
<feature type="transmembrane region" description="Helical" evidence="5">
    <location>
        <begin position="185"/>
        <end position="203"/>
    </location>
</feature>
<feature type="topological domain" description="Periplasmic" evidence="5">
    <location>
        <position position="204"/>
    </location>
</feature>
<feature type="helix" evidence="7">
    <location>
        <begin position="22"/>
        <end position="50"/>
    </location>
</feature>
<feature type="strand" evidence="6">
    <location>
        <begin position="55"/>
        <end position="57"/>
    </location>
</feature>
<feature type="helix" evidence="7">
    <location>
        <begin position="60"/>
        <end position="63"/>
    </location>
</feature>
<feature type="helix" evidence="7">
    <location>
        <begin position="66"/>
        <end position="91"/>
    </location>
</feature>
<feature type="helix" evidence="7">
    <location>
        <begin position="95"/>
        <end position="125"/>
    </location>
</feature>
<feature type="helix" evidence="7">
    <location>
        <begin position="130"/>
        <end position="132"/>
    </location>
</feature>
<feature type="helix" evidence="7">
    <location>
        <begin position="134"/>
        <end position="167"/>
    </location>
</feature>
<feature type="helix" evidence="7">
    <location>
        <begin position="171"/>
        <end position="197"/>
    </location>
</feature>
<feature type="helix" evidence="7">
    <location>
        <begin position="199"/>
        <end position="203"/>
    </location>
</feature>
<proteinExistence type="evidence at protein level"/>
<protein>
    <recommendedName>
        <fullName>Cytochrome bo(3) ubiquinol oxidase subunit 3</fullName>
    </recommendedName>
    <alternativeName>
        <fullName>Cytochrome o ubiquinol oxidase subunit 3</fullName>
        <shortName>Cytochrome o subunit 3</shortName>
    </alternativeName>
    <alternativeName>
        <fullName>Oxidase bo(3) subunit 3</fullName>
    </alternativeName>
    <alternativeName>
        <fullName>Ubiquinol oxidase chain C</fullName>
    </alternativeName>
    <alternativeName>
        <fullName>Ubiquinol oxidase polypeptide III</fullName>
    </alternativeName>
    <alternativeName>
        <fullName>Ubiquinol oxidase subunit 3</fullName>
    </alternativeName>
</protein>
<evidence type="ECO:0000269" key="1">
    <source>
    </source>
</evidence>
<evidence type="ECO:0000269" key="2">
    <source>
    </source>
</evidence>
<evidence type="ECO:0000269" key="3">
    <source>
    </source>
</evidence>
<evidence type="ECO:0000269" key="4">
    <source>
    </source>
</evidence>
<evidence type="ECO:0000305" key="5"/>
<evidence type="ECO:0007829" key="6">
    <source>
        <dbReference type="PDB" id="6WTI"/>
    </source>
</evidence>
<evidence type="ECO:0007829" key="7">
    <source>
        <dbReference type="PDB" id="7N9Z"/>
    </source>
</evidence>